<name>OMPC_ECOL6</name>
<gene>
    <name type="primary">ompC</name>
    <name type="ordered locus">c2758</name>
</gene>
<reference key="1">
    <citation type="journal article" date="2002" name="Proc. Natl. Acad. Sci. U.S.A.">
        <title>Extensive mosaic structure revealed by the complete genome sequence of uropathogenic Escherichia coli.</title>
        <authorList>
            <person name="Welch R.A."/>
            <person name="Burland V."/>
            <person name="Plunkett G. III"/>
            <person name="Redford P."/>
            <person name="Roesch P."/>
            <person name="Rasko D."/>
            <person name="Buckles E.L."/>
            <person name="Liou S.-R."/>
            <person name="Boutin A."/>
            <person name="Hackett J."/>
            <person name="Stroud D."/>
            <person name="Mayhew G.F."/>
            <person name="Rose D.J."/>
            <person name="Zhou S."/>
            <person name="Schwartz D.C."/>
            <person name="Perna N.T."/>
            <person name="Mobley H.L.T."/>
            <person name="Donnenberg M.S."/>
            <person name="Blattner F.R."/>
        </authorList>
    </citation>
    <scope>NUCLEOTIDE SEQUENCE [LARGE SCALE GENOMIC DNA]</scope>
    <source>
        <strain>CFT073 / ATCC 700928 / UPEC</strain>
    </source>
</reference>
<reference key="2">
    <citation type="journal article" date="2016" name="PLoS Pathog.">
        <title>CdiA effectors from uropathogenic Escherichia coli use heterotrimeric osmoporins as receptors to recognize target bacteria.</title>
        <authorList>
            <person name="Beck C.M."/>
            <person name="Willett J.L."/>
            <person name="Cunningham D.A."/>
            <person name="Kim J.J."/>
            <person name="Low D.A."/>
            <person name="Hayes C.S."/>
        </authorList>
    </citation>
    <scope>FUNCTION (MICROBIAL INFECTION)</scope>
    <scope>MUTAGENESIS OF 173-GLN--ARG-196 AND 229-TRP--THR-239</scope>
    <source>
        <strain>CFT073 / ATCC 700928 / UPEC</strain>
    </source>
</reference>
<reference key="3">
    <citation type="journal article" date="2011" name="PLoS ONE">
        <title>Altered antibiotic transport in OmpC mutants isolated from a series of clinical strains of multi-drug resistant E. coli.</title>
        <authorList>
            <person name="Lou H."/>
            <person name="Chen M."/>
            <person name="Black S.S."/>
            <person name="Bushell S.R."/>
            <person name="Ceccarelli M."/>
            <person name="Mach T."/>
            <person name="Beis K."/>
            <person name="Low A.S."/>
            <person name="Bamford V.A."/>
            <person name="Booth I.R."/>
            <person name="Bayley H."/>
            <person name="Naismith J.H."/>
        </authorList>
    </citation>
    <scope>X-RAY CRYSTALLOGRAPHY (2.50 ANGSTROMS) OF 22-375</scope>
    <scope>FUNCTION</scope>
    <scope>SUBUNIT</scope>
    <scope>SUBCELLULAR LOCATION</scope>
    <scope>TOPOLOGY</scope>
    <source>
        <strain>CFT073 / ATCC 700928 / UPEC</strain>
    </source>
</reference>
<evidence type="ECO:0000250" key="1"/>
<evidence type="ECO:0000269" key="2">
    <source>
    </source>
</evidence>
<evidence type="ECO:0000269" key="3">
    <source>
    </source>
</evidence>
<evidence type="ECO:0000305" key="4"/>
<evidence type="ECO:0000305" key="5">
    <source>
    </source>
</evidence>
<evidence type="ECO:0007829" key="6">
    <source>
        <dbReference type="PDB" id="2XE1"/>
    </source>
</evidence>
<sequence>MKVKVLSLLVPALLVAGAANAAEVYNKDGNKLDLYGKVDGLHYFSDDKSVDGDQTYMRLGFKGETQVTDQLTGYGQWEYQIQGNAPESENNSWTRVAFAGLKFQDIGSFDYGRNYGVVYDVTSWTDVLPEFGGDTYGSDNFMQQRGNGFATYRNTDFFGLVDGLNFAVQYQGQNGSVSGENDPDFTGHGITNNGRKALRQNGDGVGGSITYDYEGFGVGAAVSSSKRTWDQNNTGLIGTGDRAETYTGGLKYDANNIYLAAQYTQTYNATRVGSLGWANKAQNFEAVAQYQFDFGLRPSVAYLQSKGKNLGVVAGRNYDDEDILKYVDVGATYYFNKNMSTYVDYKINLLDDNQFTRAAGINTDDIVALGLVYQF</sequence>
<protein>
    <recommendedName>
        <fullName>Outer membrane porin C</fullName>
    </recommendedName>
    <alternativeName>
        <fullName>Outer membrane protein 1B</fullName>
    </alternativeName>
    <alternativeName>
        <fullName>Outer membrane protein C</fullName>
    </alternativeName>
    <alternativeName>
        <fullName>Porin OmpC</fullName>
    </alternativeName>
</protein>
<dbReference type="EMBL" id="AE014075">
    <property type="protein sequence ID" value="AAN81212.1"/>
    <property type="molecule type" value="Genomic_DNA"/>
</dbReference>
<dbReference type="RefSeq" id="WP_000865543.1">
    <property type="nucleotide sequence ID" value="NZ_CP051263.1"/>
</dbReference>
<dbReference type="PDB" id="2XE1">
    <property type="method" value="X-ray"/>
    <property type="resolution" value="2.50 A"/>
    <property type="chains" value="A=22-375"/>
</dbReference>
<dbReference type="PDBsum" id="2XE1"/>
<dbReference type="SMR" id="Q8CVW1"/>
<dbReference type="STRING" id="199310.c2758"/>
<dbReference type="KEGG" id="ecc:c2758"/>
<dbReference type="eggNOG" id="COG3203">
    <property type="taxonomic scope" value="Bacteria"/>
</dbReference>
<dbReference type="HOGENOM" id="CLU_058202_0_0_6"/>
<dbReference type="BioCyc" id="ECOL199310:C2758-MONOMER"/>
<dbReference type="EvolutionaryTrace" id="Q8CVW1"/>
<dbReference type="Proteomes" id="UP000001410">
    <property type="component" value="Chromosome"/>
</dbReference>
<dbReference type="GO" id="GO:0009279">
    <property type="term" value="C:cell outer membrane"/>
    <property type="evidence" value="ECO:0007669"/>
    <property type="project" value="UniProtKB-SubCell"/>
</dbReference>
<dbReference type="GO" id="GO:0046930">
    <property type="term" value="C:pore complex"/>
    <property type="evidence" value="ECO:0007669"/>
    <property type="project" value="UniProtKB-KW"/>
</dbReference>
<dbReference type="GO" id="GO:0015288">
    <property type="term" value="F:porin activity"/>
    <property type="evidence" value="ECO:0007669"/>
    <property type="project" value="UniProtKB-KW"/>
</dbReference>
<dbReference type="GO" id="GO:0034220">
    <property type="term" value="P:monoatomic ion transmembrane transport"/>
    <property type="evidence" value="ECO:0007669"/>
    <property type="project" value="InterPro"/>
</dbReference>
<dbReference type="FunFam" id="2.40.160.10:FF:000002">
    <property type="entry name" value="Outer membrane porin F"/>
    <property type="match status" value="1"/>
</dbReference>
<dbReference type="Gene3D" id="2.40.160.10">
    <property type="entry name" value="Porin"/>
    <property type="match status" value="1"/>
</dbReference>
<dbReference type="InterPro" id="IPR050298">
    <property type="entry name" value="Gram-neg_bact_OMP"/>
</dbReference>
<dbReference type="InterPro" id="IPR023614">
    <property type="entry name" value="Porin_dom_sf"/>
</dbReference>
<dbReference type="InterPro" id="IPR001897">
    <property type="entry name" value="Porin_gammaproteobac"/>
</dbReference>
<dbReference type="InterPro" id="IPR001702">
    <property type="entry name" value="Porin_Gram-ve"/>
</dbReference>
<dbReference type="InterPro" id="IPR013793">
    <property type="entry name" value="Porin_Gram-ve_CS"/>
</dbReference>
<dbReference type="NCBIfam" id="NF007841">
    <property type="entry name" value="PRK10554.1"/>
    <property type="match status" value="1"/>
</dbReference>
<dbReference type="PANTHER" id="PTHR34501:SF1">
    <property type="entry name" value="OUTER MEMBRANE PORIN C"/>
    <property type="match status" value="1"/>
</dbReference>
<dbReference type="PANTHER" id="PTHR34501">
    <property type="entry name" value="PROTEIN YDDL-RELATED"/>
    <property type="match status" value="1"/>
</dbReference>
<dbReference type="Pfam" id="PF00267">
    <property type="entry name" value="Porin_1"/>
    <property type="match status" value="1"/>
</dbReference>
<dbReference type="PRINTS" id="PR00183">
    <property type="entry name" value="ECOLIPORIN"/>
</dbReference>
<dbReference type="PRINTS" id="PR00182">
    <property type="entry name" value="ECOLNEIPORIN"/>
</dbReference>
<dbReference type="SUPFAM" id="SSF56935">
    <property type="entry name" value="Porins"/>
    <property type="match status" value="1"/>
</dbReference>
<dbReference type="PROSITE" id="PS00576">
    <property type="entry name" value="GRAM_NEG_PORIN"/>
    <property type="match status" value="1"/>
</dbReference>
<comment type="function">
    <text evidence="2">Forms pores that allow passive diffusion of small molecules across the outer membrane, including some antibiotics. Variation of the residues in the constriction zone modifies the transverse electric field in the zone, altering antibiotic resistance.</text>
</comment>
<comment type="function">
    <text evidence="3">(Microbial infection) Is not susceptible to CdiA-EC536-mediated toxicity, which uses OmpC-OmpF heterotrimers of some strains as its outer membrane receptor. Mutagenesis of extracellular loops L4 or L5 of this protein confers susceptibility to the toxin.</text>
</comment>
<comment type="subunit">
    <text evidence="2 5">Homotrimer (PubMed:22053181). Forms mixed heterotrimers with OmpF; other mixed heterotrimers are also probable (Probable). The N- and C-termini are two parts of the same strand. Extracellular loop 3 folds back into the lumen of the barrel forming a constriction zone that controls the pore size, while the trimer interface is formed by the packing of hydrophobic residues on the outer edges of beta strands 1 to 5 and further stabilized by extracellular loop 2 which reaches into the neighboring monomer (PubMed:22053181).</text>
</comment>
<comment type="subcellular location">
    <subcellularLocation>
        <location evidence="2 5">Cell outer membrane</location>
        <topology evidence="2">Multi-pass membrane protein</topology>
    </subcellularLocation>
</comment>
<comment type="similarity">
    <text evidence="4">Belongs to the Gram-negative porin family.</text>
</comment>
<organism>
    <name type="scientific">Escherichia coli O6:H1 (strain CFT073 / ATCC 700928 / UPEC)</name>
    <dbReference type="NCBI Taxonomy" id="199310"/>
    <lineage>
        <taxon>Bacteria</taxon>
        <taxon>Pseudomonadati</taxon>
        <taxon>Pseudomonadota</taxon>
        <taxon>Gammaproteobacteria</taxon>
        <taxon>Enterobacterales</taxon>
        <taxon>Enterobacteriaceae</taxon>
        <taxon>Escherichia</taxon>
    </lineage>
</organism>
<feature type="signal peptide" evidence="1">
    <location>
        <begin position="1"/>
        <end position="21"/>
    </location>
</feature>
<feature type="chain" id="PRO_0000025231" description="Outer membrane porin C">
    <location>
        <begin position="22"/>
        <end position="375"/>
    </location>
</feature>
<feature type="transmembrane region" description="Beta stranded" evidence="2">
    <location>
        <begin position="22"/>
        <end position="27"/>
    </location>
</feature>
<feature type="topological domain" description="Periplasmic" evidence="2">
    <location>
        <begin position="28"/>
        <end position="29"/>
    </location>
</feature>
<feature type="transmembrane region" description="Beta stranded" evidence="2">
    <location>
        <begin position="30"/>
        <end position="44"/>
    </location>
</feature>
<feature type="topological domain" description="Extracellular" evidence="2">
    <location>
        <begin position="45"/>
        <end position="50"/>
    </location>
</feature>
<feature type="transmembrane region" description="Beta stranded" evidence="2">
    <location>
        <begin position="51"/>
        <end position="66"/>
    </location>
</feature>
<feature type="topological domain" description="Periplasmic" evidence="2">
    <location>
        <begin position="67"/>
        <end position="70"/>
    </location>
</feature>
<feature type="transmembrane region" description="Beta stranded" evidence="2">
    <location>
        <begin position="71"/>
        <end position="82"/>
    </location>
</feature>
<feature type="topological domain" description="Extracellular" evidence="2">
    <location>
        <begin position="83"/>
        <end position="91"/>
    </location>
</feature>
<feature type="transmembrane region" description="Beta stranded" evidence="2">
    <location>
        <begin position="92"/>
        <end position="103"/>
    </location>
</feature>
<feature type="topological domain" description="Periplasmic" evidence="2">
    <location>
        <begin position="104"/>
        <end position="105"/>
    </location>
</feature>
<feature type="transmembrane region" description="Beta stranded" evidence="2">
    <location>
        <begin position="106"/>
        <end position="113"/>
    </location>
</feature>
<feature type="topological domain" description="Extracellular" evidence="2">
    <location>
        <begin position="114"/>
        <end position="146"/>
    </location>
</feature>
<feature type="transmembrane region" description="Beta stranded" evidence="2">
    <location>
        <begin position="147"/>
        <end position="156"/>
    </location>
</feature>
<feature type="topological domain" description="Periplasmic" evidence="2">
    <location>
        <begin position="157"/>
        <end position="163"/>
    </location>
</feature>
<feature type="transmembrane region" description="Beta stranded" evidence="2">
    <location>
        <begin position="164"/>
        <end position="172"/>
    </location>
</feature>
<feature type="topological domain" description="Extracellular" evidence="2 3">
    <location>
        <begin position="173"/>
        <end position="201"/>
    </location>
</feature>
<feature type="transmembrane region" description="Beta stranded" evidence="2">
    <location>
        <begin position="202"/>
        <end position="212"/>
    </location>
</feature>
<feature type="topological domain" description="Periplasmic" evidence="2">
    <location>
        <begin position="213"/>
        <end position="215"/>
    </location>
</feature>
<feature type="transmembrane region" description="Beta stranded" evidence="2">
    <location>
        <begin position="216"/>
        <end position="226"/>
    </location>
</feature>
<feature type="topological domain" description="Extracellular" evidence="2 3">
    <location>
        <begin position="227"/>
        <end position="241"/>
    </location>
</feature>
<feature type="transmembrane region" description="Beta stranded" evidence="2">
    <location>
        <begin position="242"/>
        <end position="254"/>
    </location>
</feature>
<feature type="topological domain" description="Periplasmic" evidence="2">
    <location>
        <begin position="255"/>
        <end position="256"/>
    </location>
</feature>
<feature type="transmembrane region" description="Beta stranded" evidence="2">
    <location>
        <begin position="257"/>
        <end position="267"/>
    </location>
</feature>
<feature type="topological domain" description="Extracellular" evidence="2">
    <location>
        <begin position="268"/>
        <end position="279"/>
    </location>
</feature>
<feature type="transmembrane region" description="Beta stranded" evidence="2">
    <location>
        <begin position="280"/>
        <end position="292"/>
    </location>
</feature>
<feature type="topological domain" description="Periplasmic" evidence="2">
    <location>
        <begin position="293"/>
        <end position="294"/>
    </location>
</feature>
<feature type="transmembrane region" description="Beta stranded" evidence="2">
    <location>
        <begin position="295"/>
        <end position="309"/>
    </location>
</feature>
<feature type="topological domain" description="Extracellular" evidence="2">
    <location>
        <begin position="310"/>
        <end position="320"/>
    </location>
</feature>
<feature type="transmembrane region" description="Beta stranded" evidence="2">
    <location>
        <begin position="321"/>
        <end position="335"/>
    </location>
</feature>
<feature type="topological domain" description="Periplasmic" evidence="2">
    <location>
        <begin position="336"/>
        <end position="338"/>
    </location>
</feature>
<feature type="transmembrane region" description="Beta stranded" evidence="2">
    <location>
        <begin position="339"/>
        <end position="348"/>
    </location>
</feature>
<feature type="topological domain" description="Extracellular" evidence="2">
    <location>
        <begin position="349"/>
        <end position="364"/>
    </location>
</feature>
<feature type="transmembrane region" description="Beta stranded" evidence="2">
    <location>
        <begin position="365"/>
        <end position="375"/>
    </location>
</feature>
<feature type="mutagenesis site" description="Becomes susceptible to CdiA-EC536; replaces extracellular loop 4 with that of OmpC from strain F11." evidence="3">
    <original>QNGSVSGENDPDFTGHGITNNGRK</original>
    <variation>KNGSVSGEGMTNNGRD</variation>
    <location>
        <begin position="173"/>
        <end position="196"/>
    </location>
</feature>
<feature type="mutagenesis site" description="Becomes susceptible to CdiA-EC536; replaces extracellular loop 5 with that of OmpC from strain EC536." evidence="3">
    <original>WDQNNTGLIGT</original>
    <variation>DAQNTAAYIGN</variation>
    <location>
        <begin position="229"/>
        <end position="239"/>
    </location>
</feature>
<feature type="strand" evidence="6">
    <location>
        <begin position="23"/>
        <end position="27"/>
    </location>
</feature>
<feature type="strand" evidence="6">
    <location>
        <begin position="30"/>
        <end position="46"/>
    </location>
</feature>
<feature type="turn" evidence="6">
    <location>
        <begin position="48"/>
        <end position="50"/>
    </location>
</feature>
<feature type="strand" evidence="6">
    <location>
        <begin position="56"/>
        <end position="66"/>
    </location>
</feature>
<feature type="strand" evidence="6">
    <location>
        <begin position="68"/>
        <end position="85"/>
    </location>
</feature>
<feature type="strand" evidence="6">
    <location>
        <begin position="92"/>
        <end position="103"/>
    </location>
</feature>
<feature type="turn" evidence="6">
    <location>
        <begin position="104"/>
        <end position="106"/>
    </location>
</feature>
<feature type="strand" evidence="6">
    <location>
        <begin position="107"/>
        <end position="115"/>
    </location>
</feature>
<feature type="helix" evidence="6">
    <location>
        <begin position="119"/>
        <end position="122"/>
    </location>
</feature>
<feature type="helix" evidence="6">
    <location>
        <begin position="123"/>
        <end position="125"/>
    </location>
</feature>
<feature type="strand" evidence="6">
    <location>
        <begin position="129"/>
        <end position="131"/>
    </location>
</feature>
<feature type="strand" evidence="6">
    <location>
        <begin position="143"/>
        <end position="155"/>
    </location>
</feature>
<feature type="helix" evidence="6">
    <location>
        <begin position="156"/>
        <end position="159"/>
    </location>
</feature>
<feature type="strand" evidence="6">
    <location>
        <begin position="164"/>
        <end position="171"/>
    </location>
</feature>
<feature type="strand" evidence="6">
    <location>
        <begin position="187"/>
        <end position="190"/>
    </location>
</feature>
<feature type="helix" evidence="6">
    <location>
        <begin position="197"/>
        <end position="199"/>
    </location>
</feature>
<feature type="strand" evidence="6">
    <location>
        <begin position="203"/>
        <end position="213"/>
    </location>
</feature>
<feature type="strand" evidence="6">
    <location>
        <begin position="216"/>
        <end position="226"/>
    </location>
</feature>
<feature type="helix" evidence="6">
    <location>
        <begin position="229"/>
        <end position="233"/>
    </location>
</feature>
<feature type="strand" evidence="6">
    <location>
        <begin position="241"/>
        <end position="254"/>
    </location>
</feature>
<feature type="strand" evidence="6">
    <location>
        <begin position="257"/>
        <end position="268"/>
    </location>
</feature>
<feature type="strand" evidence="6">
    <location>
        <begin position="275"/>
        <end position="277"/>
    </location>
</feature>
<feature type="strand" evidence="6">
    <location>
        <begin position="279"/>
        <end position="290"/>
    </location>
</feature>
<feature type="strand" evidence="6">
    <location>
        <begin position="295"/>
        <end position="309"/>
    </location>
</feature>
<feature type="strand" evidence="6">
    <location>
        <begin position="311"/>
        <end position="313"/>
    </location>
</feature>
<feature type="strand" evidence="6">
    <location>
        <begin position="316"/>
        <end position="336"/>
    </location>
</feature>
<feature type="strand" evidence="6">
    <location>
        <begin position="339"/>
        <end position="348"/>
    </location>
</feature>
<feature type="helix" evidence="6">
    <location>
        <begin position="354"/>
        <end position="359"/>
    </location>
</feature>
<feature type="strand" evidence="6">
    <location>
        <begin position="366"/>
        <end position="375"/>
    </location>
</feature>
<proteinExistence type="evidence at protein level"/>
<accession>Q8CVW1</accession>
<keyword id="KW-0002">3D-structure</keyword>
<keyword id="KW-0998">Cell outer membrane</keyword>
<keyword id="KW-0406">Ion transport</keyword>
<keyword id="KW-0472">Membrane</keyword>
<keyword id="KW-0626">Porin</keyword>
<keyword id="KW-1185">Reference proteome</keyword>
<keyword id="KW-0732">Signal</keyword>
<keyword id="KW-0812">Transmembrane</keyword>
<keyword id="KW-1134">Transmembrane beta strand</keyword>
<keyword id="KW-0813">Transport</keyword>